<reference key="1">
    <citation type="journal article" date="2000" name="Proc. Natl. Acad. Sci. U.S.A.">
        <title>Genome sequence of Halobacterium species NRC-1.</title>
        <authorList>
            <person name="Ng W.V."/>
            <person name="Kennedy S.P."/>
            <person name="Mahairas G.G."/>
            <person name="Berquist B."/>
            <person name="Pan M."/>
            <person name="Shukla H.D."/>
            <person name="Lasky S.R."/>
            <person name="Baliga N.S."/>
            <person name="Thorsson V."/>
            <person name="Sbrogna J."/>
            <person name="Swartzell S."/>
            <person name="Weir D."/>
            <person name="Hall J."/>
            <person name="Dahl T.A."/>
            <person name="Welti R."/>
            <person name="Goo Y.A."/>
            <person name="Leithauser B."/>
            <person name="Keller K."/>
            <person name="Cruz R."/>
            <person name="Danson M.J."/>
            <person name="Hough D.W."/>
            <person name="Maddocks D.G."/>
            <person name="Jablonski P.E."/>
            <person name="Krebs M.P."/>
            <person name="Angevine C.M."/>
            <person name="Dale H."/>
            <person name="Isenbarger T.A."/>
            <person name="Peck R.F."/>
            <person name="Pohlschroder M."/>
            <person name="Spudich J.L."/>
            <person name="Jung K.-H."/>
            <person name="Alam M."/>
            <person name="Freitas T."/>
            <person name="Hou S."/>
            <person name="Daniels C.J."/>
            <person name="Dennis P.P."/>
            <person name="Omer A.D."/>
            <person name="Ebhardt H."/>
            <person name="Lowe T.M."/>
            <person name="Liang P."/>
            <person name="Riley M."/>
            <person name="Hood L."/>
            <person name="DasSarma S."/>
        </authorList>
    </citation>
    <scope>NUCLEOTIDE SEQUENCE [LARGE SCALE GENOMIC DNA]</scope>
    <source>
        <strain>ATCC 700922 / JCM 11081 / NRC-1</strain>
    </source>
</reference>
<organism>
    <name type="scientific">Halobacterium salinarum (strain ATCC 700922 / JCM 11081 / NRC-1)</name>
    <name type="common">Halobacterium halobium</name>
    <dbReference type="NCBI Taxonomy" id="64091"/>
    <lineage>
        <taxon>Archaea</taxon>
        <taxon>Methanobacteriati</taxon>
        <taxon>Methanobacteriota</taxon>
        <taxon>Stenosarchaea group</taxon>
        <taxon>Halobacteria</taxon>
        <taxon>Halobacteriales</taxon>
        <taxon>Halobacteriaceae</taxon>
        <taxon>Halobacterium</taxon>
        <taxon>Halobacterium salinarum NRC-34001</taxon>
    </lineage>
</organism>
<protein>
    <recommendedName>
        <fullName>Archaeal Lon protease</fullName>
        <ecNumber>3.4.21.-</ecNumber>
    </recommendedName>
    <alternativeName>
        <fullName>ATP-dependent protease La homolog</fullName>
    </alternativeName>
</protein>
<comment type="function">
    <text evidence="1">ATP-dependent serine protease that mediates the selective degradation of mutant and abnormal proteins as well as certain short-lived regulatory proteins. Degrades polypeptides processively (By similarity).</text>
</comment>
<comment type="subunit">
    <text evidence="1">Homohexamer. Organized in a ring with a central cavity (By similarity).</text>
</comment>
<comment type="subcellular location">
    <subcellularLocation>
        <location evidence="1">Cell membrane</location>
        <topology evidence="6">Multi-pass membrane protein</topology>
    </subcellularLocation>
</comment>
<comment type="similarity">
    <text evidence="6">Belongs to the peptidase S16 family. Archaeal LonB subfamily.</text>
</comment>
<gene>
    <name type="ordered locus">VNG_0303G</name>
</gene>
<name>LONB_HALSA</name>
<proteinExistence type="inferred from homology"/>
<feature type="chain" id="PRO_0000076152" description="Archaeal Lon protease">
    <location>
        <begin position="1"/>
        <end position="702"/>
    </location>
</feature>
<feature type="topological domain" description="Cytoplasmic" evidence="2">
    <location>
        <begin position="1"/>
        <end position="183"/>
    </location>
</feature>
<feature type="transmembrane region" description="Helical" evidence="2">
    <location>
        <begin position="184"/>
        <end position="201"/>
    </location>
</feature>
<feature type="topological domain" description="Extracellular" evidence="2">
    <location>
        <begin position="202"/>
        <end position="206"/>
    </location>
</feature>
<feature type="transmembrane region" description="Helical" evidence="2">
    <location>
        <begin position="207"/>
        <end position="223"/>
    </location>
</feature>
<feature type="topological domain" description="Cytoplasmic" evidence="2">
    <location>
        <begin position="224"/>
        <end position="702"/>
    </location>
</feature>
<feature type="domain" description="Lon proteolytic" evidence="3">
    <location>
        <begin position="487"/>
        <end position="667"/>
    </location>
</feature>
<feature type="region of interest" description="Disordered" evidence="5">
    <location>
        <begin position="1"/>
        <end position="63"/>
    </location>
</feature>
<feature type="compositionally biased region" description="Acidic residues" evidence="5">
    <location>
        <begin position="10"/>
        <end position="48"/>
    </location>
</feature>
<feature type="active site" evidence="4">
    <location>
        <position position="574"/>
    </location>
</feature>
<feature type="active site" evidence="4">
    <location>
        <position position="617"/>
    </location>
</feature>
<feature type="binding site" evidence="2">
    <location>
        <begin position="117"/>
        <end position="124"/>
    </location>
    <ligand>
        <name>ATP</name>
        <dbReference type="ChEBI" id="CHEBI:30616"/>
    </ligand>
</feature>
<accession>Q9HSC3</accession>
<keyword id="KW-0067">ATP-binding</keyword>
<keyword id="KW-1003">Cell membrane</keyword>
<keyword id="KW-0378">Hydrolase</keyword>
<keyword id="KW-0472">Membrane</keyword>
<keyword id="KW-0547">Nucleotide-binding</keyword>
<keyword id="KW-0645">Protease</keyword>
<keyword id="KW-1185">Reference proteome</keyword>
<keyword id="KW-0720">Serine protease</keyword>
<keyword id="KW-0812">Transmembrane</keyword>
<keyword id="KW-1133">Transmembrane helix</keyword>
<dbReference type="EC" id="3.4.21.-"/>
<dbReference type="EMBL" id="AE004437">
    <property type="protein sequence ID" value="AAG18884.1"/>
    <property type="molecule type" value="Genomic_DNA"/>
</dbReference>
<dbReference type="PIR" id="H84189">
    <property type="entry name" value="H84189"/>
</dbReference>
<dbReference type="SMR" id="Q9HSC3"/>
<dbReference type="STRING" id="64091.VNG_0303G"/>
<dbReference type="MEROPS" id="S16.A11"/>
<dbReference type="PaxDb" id="64091-VNG_0303G"/>
<dbReference type="KEGG" id="hal:VNG_0303G"/>
<dbReference type="PATRIC" id="fig|64091.14.peg.223"/>
<dbReference type="HOGENOM" id="CLU_392630_0_0_2"/>
<dbReference type="InParanoid" id="Q9HSC3"/>
<dbReference type="OrthoDB" id="64652at2157"/>
<dbReference type="Proteomes" id="UP000000554">
    <property type="component" value="Chromosome"/>
</dbReference>
<dbReference type="GO" id="GO:0005886">
    <property type="term" value="C:plasma membrane"/>
    <property type="evidence" value="ECO:0007669"/>
    <property type="project" value="UniProtKB-SubCell"/>
</dbReference>
<dbReference type="GO" id="GO:0005524">
    <property type="term" value="F:ATP binding"/>
    <property type="evidence" value="ECO:0007669"/>
    <property type="project" value="UniProtKB-KW"/>
</dbReference>
<dbReference type="GO" id="GO:0016887">
    <property type="term" value="F:ATP hydrolysis activity"/>
    <property type="evidence" value="ECO:0007669"/>
    <property type="project" value="InterPro"/>
</dbReference>
<dbReference type="GO" id="GO:0004176">
    <property type="term" value="F:ATP-dependent peptidase activity"/>
    <property type="evidence" value="ECO:0007669"/>
    <property type="project" value="InterPro"/>
</dbReference>
<dbReference type="GO" id="GO:0004252">
    <property type="term" value="F:serine-type endopeptidase activity"/>
    <property type="evidence" value="ECO:0007669"/>
    <property type="project" value="InterPro"/>
</dbReference>
<dbReference type="GO" id="GO:0030163">
    <property type="term" value="P:protein catabolic process"/>
    <property type="evidence" value="ECO:0007669"/>
    <property type="project" value="InterPro"/>
</dbReference>
<dbReference type="GO" id="GO:0006508">
    <property type="term" value="P:proteolysis"/>
    <property type="evidence" value="ECO:0007669"/>
    <property type="project" value="UniProtKB-KW"/>
</dbReference>
<dbReference type="GO" id="GO:0006355">
    <property type="term" value="P:regulation of DNA-templated transcription"/>
    <property type="evidence" value="ECO:0007669"/>
    <property type="project" value="InterPro"/>
</dbReference>
<dbReference type="CDD" id="cd00009">
    <property type="entry name" value="AAA"/>
    <property type="match status" value="1"/>
</dbReference>
<dbReference type="Gene3D" id="1.10.8.60">
    <property type="match status" value="1"/>
</dbReference>
<dbReference type="Gene3D" id="3.30.230.10">
    <property type="match status" value="1"/>
</dbReference>
<dbReference type="Gene3D" id="3.40.50.300">
    <property type="entry name" value="P-loop containing nucleotide triphosphate hydrolases"/>
    <property type="match status" value="2"/>
</dbReference>
<dbReference type="InterPro" id="IPR003593">
    <property type="entry name" value="AAA+_ATPase"/>
</dbReference>
<dbReference type="InterPro" id="IPR004663">
    <property type="entry name" value="Lon_arc"/>
</dbReference>
<dbReference type="InterPro" id="IPR008269">
    <property type="entry name" value="Lon_proteolytic"/>
</dbReference>
<dbReference type="InterPro" id="IPR027065">
    <property type="entry name" value="Lon_Prtase"/>
</dbReference>
<dbReference type="InterPro" id="IPR046843">
    <property type="entry name" value="LonB_AAA-LID"/>
</dbReference>
<dbReference type="InterPro" id="IPR000523">
    <property type="entry name" value="Mg_chelatse_chII-like_cat_dom"/>
</dbReference>
<dbReference type="InterPro" id="IPR027417">
    <property type="entry name" value="P-loop_NTPase"/>
</dbReference>
<dbReference type="InterPro" id="IPR008268">
    <property type="entry name" value="Peptidase_S16_AS"/>
</dbReference>
<dbReference type="InterPro" id="IPR020568">
    <property type="entry name" value="Ribosomal_Su5_D2-typ_SF"/>
</dbReference>
<dbReference type="InterPro" id="IPR014721">
    <property type="entry name" value="Ribsml_uS5_D2-typ_fold_subgr"/>
</dbReference>
<dbReference type="InterPro" id="IPR002078">
    <property type="entry name" value="Sigma_54_int"/>
</dbReference>
<dbReference type="NCBIfam" id="TIGR00764">
    <property type="entry name" value="lon_rel"/>
    <property type="match status" value="1"/>
</dbReference>
<dbReference type="PANTHER" id="PTHR10046">
    <property type="entry name" value="ATP DEPENDENT LON PROTEASE FAMILY MEMBER"/>
    <property type="match status" value="1"/>
</dbReference>
<dbReference type="Pfam" id="PF05362">
    <property type="entry name" value="Lon_C"/>
    <property type="match status" value="1"/>
</dbReference>
<dbReference type="Pfam" id="PF20436">
    <property type="entry name" value="LonB_AAA-LID"/>
    <property type="match status" value="1"/>
</dbReference>
<dbReference type="Pfam" id="PF01078">
    <property type="entry name" value="Mg_chelatase"/>
    <property type="match status" value="1"/>
</dbReference>
<dbReference type="Pfam" id="PF00158">
    <property type="entry name" value="Sigma54_activat"/>
    <property type="match status" value="1"/>
</dbReference>
<dbReference type="PRINTS" id="PR00830">
    <property type="entry name" value="ENDOLAPTASE"/>
</dbReference>
<dbReference type="SMART" id="SM00382">
    <property type="entry name" value="AAA"/>
    <property type="match status" value="1"/>
</dbReference>
<dbReference type="SUPFAM" id="SSF52540">
    <property type="entry name" value="P-loop containing nucleoside triphosphate hydrolases"/>
    <property type="match status" value="1"/>
</dbReference>
<dbReference type="SUPFAM" id="SSF54211">
    <property type="entry name" value="Ribosomal protein S5 domain 2-like"/>
    <property type="match status" value="1"/>
</dbReference>
<dbReference type="PROSITE" id="PS51786">
    <property type="entry name" value="LON_PROTEOLYTIC"/>
    <property type="match status" value="1"/>
</dbReference>
<dbReference type="PROSITE" id="PS01046">
    <property type="entry name" value="LON_SER"/>
    <property type="match status" value="1"/>
</dbReference>
<sequence>MSNESTNDAPPDDDPDDPEPSVDHDDTDGLQDDPADSVDDAGEVDDLENLGSDVGVEGDVSIDEDNAEDDLLGGLRIDDTSDITVPDRLVDQVIGQEAAREIVKRAAKQHRHVMMIGSPGTGKSLLAKAMSRLLPKESLQDVLVYHNPDDSNEPKVRTVPAGKGEQIVDAHKEEARKRNQMRSFLMWIMILLAVGYALLIATPARPLLALLSAAGIYLLFRYTNRGSDAMVPKLLINNADRQVAPFEDATGAHAGAMLGDVRHDPFQSGGMATPSHERVEAGSIQKANKGVLFIDEINTLDVRSQQKLMTAIQEGEFSITGQSERSSGAMVQTEAVPCDFIMVAAGNMDAMENMHPALRSRIKGYGYEVYMDDTIEDTPDMRRKYARFVAQEVEKDGNLPHFAPDAIRELILEAKRRAGRKDSLTLKLRDLGGLVRVAGDIARSEGHDLTQRSDVLEAKKRSRSIEQQFVDNYIQRRKDYELGTTSEEAVGRVNGLAVMGGDSGIMLPVMAEITPAQSQEEGRIYATGQLKEMAEEAVENVSAIIKKFSDENMSEKDTHIQFVQAGEGGVDGDSASITVATAVISALEDIPVAQELAMTGSLSVRGDVLPVGGVTHKIEAAAKAGCERVIIPKANEDDVMIEDEYEEQIEIIPVTHISEVLDVALVGEPEKDSLVDRLKSITGKALDSASDSGTTGGNPSPQ</sequence>
<evidence type="ECO:0000250" key="1"/>
<evidence type="ECO:0000255" key="2"/>
<evidence type="ECO:0000255" key="3">
    <source>
        <dbReference type="PROSITE-ProRule" id="PRU01122"/>
    </source>
</evidence>
<evidence type="ECO:0000255" key="4">
    <source>
        <dbReference type="PROSITE-ProRule" id="PRU10087"/>
    </source>
</evidence>
<evidence type="ECO:0000256" key="5">
    <source>
        <dbReference type="SAM" id="MobiDB-lite"/>
    </source>
</evidence>
<evidence type="ECO:0000305" key="6"/>